<feature type="chain" id="PRO_0000208328" description="Glutamyl-Q tRNA(Asp) synthetase">
    <location>
        <begin position="1"/>
        <end position="323"/>
    </location>
</feature>
<feature type="short sequence motif" description="'HIGH' region">
    <location>
        <begin position="8"/>
        <end position="18"/>
    </location>
</feature>
<feature type="short sequence motif" description="'KMSKS' region">
    <location>
        <begin position="249"/>
        <end position="253"/>
    </location>
</feature>
<feature type="binding site" evidence="1">
    <location>
        <begin position="5"/>
        <end position="9"/>
    </location>
    <ligand>
        <name>L-glutamate</name>
        <dbReference type="ChEBI" id="CHEBI:29985"/>
    </ligand>
</feature>
<feature type="binding site" evidence="1">
    <location>
        <position position="41"/>
    </location>
    <ligand>
        <name>L-glutamate</name>
        <dbReference type="ChEBI" id="CHEBI:29985"/>
    </ligand>
</feature>
<feature type="binding site" evidence="1">
    <location>
        <position position="105"/>
    </location>
    <ligand>
        <name>Zn(2+)</name>
        <dbReference type="ChEBI" id="CHEBI:29105"/>
    </ligand>
</feature>
<feature type="binding site" evidence="1">
    <location>
        <position position="107"/>
    </location>
    <ligand>
        <name>Zn(2+)</name>
        <dbReference type="ChEBI" id="CHEBI:29105"/>
    </ligand>
</feature>
<feature type="binding site" evidence="1">
    <location>
        <position position="129"/>
    </location>
    <ligand>
        <name>Zn(2+)</name>
        <dbReference type="ChEBI" id="CHEBI:29105"/>
    </ligand>
</feature>
<feature type="binding site" evidence="1">
    <location>
        <position position="133"/>
    </location>
    <ligand>
        <name>Zn(2+)</name>
        <dbReference type="ChEBI" id="CHEBI:29105"/>
    </ligand>
</feature>
<feature type="binding site" evidence="1">
    <location>
        <position position="193"/>
    </location>
    <ligand>
        <name>L-glutamate</name>
        <dbReference type="ChEBI" id="CHEBI:29985"/>
    </ligand>
</feature>
<feature type="binding site" evidence="1">
    <location>
        <position position="211"/>
    </location>
    <ligand>
        <name>L-glutamate</name>
        <dbReference type="ChEBI" id="CHEBI:29985"/>
    </ligand>
</feature>
<feature type="binding site" evidence="1">
    <location>
        <position position="252"/>
    </location>
    <ligand>
        <name>ATP</name>
        <dbReference type="ChEBI" id="CHEBI:30616"/>
    </ligand>
</feature>
<gene>
    <name evidence="1" type="primary">gluQ</name>
    <name type="ordered locus">STH2668</name>
</gene>
<protein>
    <recommendedName>
        <fullName evidence="1">Glutamyl-Q tRNA(Asp) synthetase</fullName>
        <shortName evidence="1">Glu-Q-RSs</shortName>
        <ecNumber evidence="1">6.1.1.-</ecNumber>
    </recommendedName>
</protein>
<organism>
    <name type="scientific">Symbiobacterium thermophilum (strain DSM 24528 / JCM 14929 / IAM 14863 / T)</name>
    <dbReference type="NCBI Taxonomy" id="292459"/>
    <lineage>
        <taxon>Bacteria</taxon>
        <taxon>Bacillati</taxon>
        <taxon>Bacillota</taxon>
        <taxon>Clostridia</taxon>
        <taxon>Eubacteriales</taxon>
        <taxon>Symbiobacteriaceae</taxon>
        <taxon>Symbiobacterium</taxon>
    </lineage>
</organism>
<comment type="function">
    <text evidence="1">Catalyzes the tRNA-independent activation of glutamate in presence of ATP and the subsequent transfer of glutamate onto a tRNA(Asp). Glutamate is transferred on the 2-amino-5-(4,5-dihydroxy-2-cyclopenten-1-yl) moiety of the queuosine in the wobble position of the QUC anticodon.</text>
</comment>
<comment type="cofactor">
    <cofactor evidence="1">
        <name>Zn(2+)</name>
        <dbReference type="ChEBI" id="CHEBI:29105"/>
    </cofactor>
    <text evidence="1">Binds 1 zinc ion per subunit.</text>
</comment>
<comment type="similarity">
    <text evidence="1">Belongs to the class-I aminoacyl-tRNA synthetase family. GluQ subfamily.</text>
</comment>
<evidence type="ECO:0000255" key="1">
    <source>
        <dbReference type="HAMAP-Rule" id="MF_01428"/>
    </source>
</evidence>
<keyword id="KW-0030">Aminoacyl-tRNA synthetase</keyword>
<keyword id="KW-0067">ATP-binding</keyword>
<keyword id="KW-0436">Ligase</keyword>
<keyword id="KW-0479">Metal-binding</keyword>
<keyword id="KW-0547">Nucleotide-binding</keyword>
<keyword id="KW-1185">Reference proteome</keyword>
<keyword id="KW-0862">Zinc</keyword>
<name>GLUQ_SYMTH</name>
<sequence>MLCGRFAPTPSGALHLGNARTALLAWLHARRAGGRFILRIEDIDRARSRPHLAEQAIADLRWLGLDWDEGPDVGGPHGPYCQSEREELYRDALARLQAEGRLYPCYCSRAQLMAIASAPHGLTSEGPAYPGTCRRLTPEERRAREADGKTPSLRFALPDEEIAFTDLIAGPQRFPPGAGGDFVVLRADGVIGYQLAVVVDDALMGVTHVLRGGDLLDSTPRQILLYRALGRPVPAFGHLPLLLGPDGARLAKRHGAVTLAGIRAAGTSPETVVGHLAYLSGLVDQPEPVRPEELIPVFDLARIPREPVRIPAETIAALSGGTA</sequence>
<dbReference type="EC" id="6.1.1.-" evidence="1"/>
<dbReference type="EMBL" id="AP006840">
    <property type="protein sequence ID" value="BAD41653.1"/>
    <property type="molecule type" value="Genomic_DNA"/>
</dbReference>
<dbReference type="RefSeq" id="WP_011196790.1">
    <property type="nucleotide sequence ID" value="NC_006177.1"/>
</dbReference>
<dbReference type="SMR" id="Q67KZ3"/>
<dbReference type="STRING" id="292459.STH2668"/>
<dbReference type="KEGG" id="sth:STH2668"/>
<dbReference type="eggNOG" id="COG0008">
    <property type="taxonomic scope" value="Bacteria"/>
</dbReference>
<dbReference type="HOGENOM" id="CLU_015768_0_0_9"/>
<dbReference type="OrthoDB" id="9807503at2"/>
<dbReference type="Proteomes" id="UP000000417">
    <property type="component" value="Chromosome"/>
</dbReference>
<dbReference type="GO" id="GO:0005829">
    <property type="term" value="C:cytosol"/>
    <property type="evidence" value="ECO:0007669"/>
    <property type="project" value="TreeGrafter"/>
</dbReference>
<dbReference type="GO" id="GO:0005524">
    <property type="term" value="F:ATP binding"/>
    <property type="evidence" value="ECO:0007669"/>
    <property type="project" value="UniProtKB-KW"/>
</dbReference>
<dbReference type="GO" id="GO:0004818">
    <property type="term" value="F:glutamate-tRNA ligase activity"/>
    <property type="evidence" value="ECO:0007669"/>
    <property type="project" value="TreeGrafter"/>
</dbReference>
<dbReference type="GO" id="GO:0008270">
    <property type="term" value="F:zinc ion binding"/>
    <property type="evidence" value="ECO:0007669"/>
    <property type="project" value="UniProtKB-UniRule"/>
</dbReference>
<dbReference type="GO" id="GO:0006424">
    <property type="term" value="P:glutamyl-tRNA aminoacylation"/>
    <property type="evidence" value="ECO:0007669"/>
    <property type="project" value="InterPro"/>
</dbReference>
<dbReference type="GO" id="GO:0006400">
    <property type="term" value="P:tRNA modification"/>
    <property type="evidence" value="ECO:0007669"/>
    <property type="project" value="InterPro"/>
</dbReference>
<dbReference type="Gene3D" id="3.40.50.620">
    <property type="entry name" value="HUPs"/>
    <property type="match status" value="1"/>
</dbReference>
<dbReference type="HAMAP" id="MF_01428">
    <property type="entry name" value="Glu_Q_tRNA_synth"/>
    <property type="match status" value="1"/>
</dbReference>
<dbReference type="InterPro" id="IPR001412">
    <property type="entry name" value="aa-tRNA-synth_I_CS"/>
</dbReference>
<dbReference type="InterPro" id="IPR022380">
    <property type="entry name" value="Glu-Q_tRNA(Asp)_Synthase"/>
</dbReference>
<dbReference type="InterPro" id="IPR000924">
    <property type="entry name" value="Glu/Gln-tRNA-synth"/>
</dbReference>
<dbReference type="InterPro" id="IPR020058">
    <property type="entry name" value="Glu/Gln-tRNA-synth_Ib_cat-dom"/>
</dbReference>
<dbReference type="InterPro" id="IPR049940">
    <property type="entry name" value="GluQ/Sye"/>
</dbReference>
<dbReference type="InterPro" id="IPR014729">
    <property type="entry name" value="Rossmann-like_a/b/a_fold"/>
</dbReference>
<dbReference type="NCBIfam" id="NF004314">
    <property type="entry name" value="PRK05710.1-3"/>
    <property type="match status" value="1"/>
</dbReference>
<dbReference type="NCBIfam" id="NF004315">
    <property type="entry name" value="PRK05710.1-4"/>
    <property type="match status" value="1"/>
</dbReference>
<dbReference type="NCBIfam" id="TIGR03838">
    <property type="entry name" value="queuosine_YadB"/>
    <property type="match status" value="1"/>
</dbReference>
<dbReference type="PANTHER" id="PTHR43311">
    <property type="entry name" value="GLUTAMATE--TRNA LIGASE"/>
    <property type="match status" value="1"/>
</dbReference>
<dbReference type="PANTHER" id="PTHR43311:SF1">
    <property type="entry name" value="GLUTAMYL-Q TRNA(ASP) SYNTHETASE"/>
    <property type="match status" value="1"/>
</dbReference>
<dbReference type="Pfam" id="PF00749">
    <property type="entry name" value="tRNA-synt_1c"/>
    <property type="match status" value="1"/>
</dbReference>
<dbReference type="PRINTS" id="PR00987">
    <property type="entry name" value="TRNASYNTHGLU"/>
</dbReference>
<dbReference type="SUPFAM" id="SSF52374">
    <property type="entry name" value="Nucleotidylyl transferase"/>
    <property type="match status" value="1"/>
</dbReference>
<dbReference type="PROSITE" id="PS00178">
    <property type="entry name" value="AA_TRNA_LIGASE_I"/>
    <property type="match status" value="1"/>
</dbReference>
<reference key="1">
    <citation type="journal article" date="2004" name="Nucleic Acids Res.">
        <title>Genome sequence of Symbiobacterium thermophilum, an uncultivable bacterium that depends on microbial commensalism.</title>
        <authorList>
            <person name="Ueda K."/>
            <person name="Yamashita A."/>
            <person name="Ishikawa J."/>
            <person name="Shimada M."/>
            <person name="Watsuji T."/>
            <person name="Morimura K."/>
            <person name="Ikeda H."/>
            <person name="Hattori M."/>
            <person name="Beppu T."/>
        </authorList>
    </citation>
    <scope>NUCLEOTIDE SEQUENCE [LARGE SCALE GENOMIC DNA]</scope>
    <source>
        <strain>DSM 24528 / JCM 14929 / IAM 14863 / T</strain>
    </source>
</reference>
<accession>Q67KZ3</accession>
<proteinExistence type="inferred from homology"/>